<keyword id="KW-0378">Hydrolase</keyword>
<keyword id="KW-0442">Lipid degradation</keyword>
<keyword id="KW-0443">Lipid metabolism</keyword>
<keyword id="KW-0472">Membrane</keyword>
<keyword id="KW-0479">Metal-binding</keyword>
<keyword id="KW-0496">Mitochondrion</keyword>
<keyword id="KW-0595">Phospholipid degradation</keyword>
<keyword id="KW-1208">Phospholipid metabolism</keyword>
<keyword id="KW-1185">Reference proteome</keyword>
<keyword id="KW-0809">Transit peptide</keyword>
<keyword id="KW-0812">Transmembrane</keyword>
<keyword id="KW-1133">Transmembrane helix</keyword>
<keyword id="KW-0862">Zinc</keyword>
<feature type="transit peptide" description="Mitochondrion" evidence="2">
    <location>
        <begin position="1"/>
        <end position="39"/>
    </location>
</feature>
<feature type="chain" id="PRO_0000238633" description="N-acyl-phosphatidylethanolamine-hydrolyzing phospholipase D, mitochondrial">
    <location>
        <begin position="40"/>
        <end position="468"/>
    </location>
</feature>
<feature type="transmembrane region" description="Helical" evidence="2">
    <location>
        <begin position="54"/>
        <end position="76"/>
    </location>
</feature>
<feature type="binding site" evidence="2">
    <location>
        <position position="265"/>
    </location>
    <ligand>
        <name>Zn(2+)</name>
        <dbReference type="ChEBI" id="CHEBI:29105"/>
        <label>1</label>
    </ligand>
</feature>
<feature type="binding site" evidence="2">
    <location>
        <position position="267"/>
    </location>
    <ligand>
        <name>Zn(2+)</name>
        <dbReference type="ChEBI" id="CHEBI:29105"/>
        <label>1</label>
    </ligand>
</feature>
<feature type="binding site" evidence="2">
    <location>
        <position position="269"/>
    </location>
    <ligand>
        <name>Zn(2+)</name>
        <dbReference type="ChEBI" id="CHEBI:29105"/>
        <label>2</label>
    </ligand>
</feature>
<feature type="binding site" evidence="2">
    <location>
        <position position="270"/>
    </location>
    <ligand>
        <name>Zn(2+)</name>
        <dbReference type="ChEBI" id="CHEBI:29105"/>
        <label>2</label>
    </ligand>
</feature>
<feature type="binding site" evidence="2">
    <location>
        <position position="332"/>
    </location>
    <ligand>
        <name>Zn(2+)</name>
        <dbReference type="ChEBI" id="CHEBI:29105"/>
        <label>1</label>
    </ligand>
</feature>
<feature type="binding site" evidence="2">
    <location>
        <position position="425"/>
    </location>
    <ligand>
        <name>Zn(2+)</name>
        <dbReference type="ChEBI" id="CHEBI:29105"/>
        <label>2</label>
    </ligand>
</feature>
<comment type="function">
    <text evidence="4">Hydrolyzes N-acyl-phosphatidylethanolamines (NAPEs) to produce N-acylethanolamines (NAEs).</text>
</comment>
<comment type="catalytic activity">
    <reaction>
        <text>an N-acyl-1,2-diacyl-sn-glycero-3-phosphoethanolamine + H2O = an N-acylethanolamine + a 1,2-diacyl-sn-glycero-3-phosphate + H(+)</text>
        <dbReference type="Rhea" id="RHEA:33159"/>
        <dbReference type="ChEBI" id="CHEBI:15377"/>
        <dbReference type="ChEBI" id="CHEBI:15378"/>
        <dbReference type="ChEBI" id="CHEBI:52640"/>
        <dbReference type="ChEBI" id="CHEBI:58608"/>
        <dbReference type="ChEBI" id="CHEBI:62537"/>
        <dbReference type="EC" id="3.1.4.54"/>
    </reaction>
</comment>
<comment type="cofactor">
    <cofactor evidence="1">
        <name>Zn(2+)</name>
        <dbReference type="ChEBI" id="CHEBI:29105"/>
    </cofactor>
    <text evidence="1">Binds 1 or 2 zinc ions per subunit.</text>
</comment>
<comment type="subcellular location">
    <subcellularLocation>
        <location evidence="6">Mitochondrion membrane</location>
        <topology evidence="6">Single-pass membrane protein</topology>
    </subcellularLocation>
</comment>
<comment type="induction">
    <text evidence="5">Expressed periodically during the glycolytic and respiratory oscillations cycles.</text>
</comment>
<comment type="miscellaneous">
    <text evidence="3">Present with 178 molecules/cell in log phase SD medium.</text>
</comment>
<comment type="similarity">
    <text evidence="6">Belongs to the NAPE-PLD family.</text>
</comment>
<organism>
    <name type="scientific">Saccharomyces cerevisiae (strain ATCC 204508 / S288c)</name>
    <name type="common">Baker's yeast</name>
    <dbReference type="NCBI Taxonomy" id="559292"/>
    <lineage>
        <taxon>Eukaryota</taxon>
        <taxon>Fungi</taxon>
        <taxon>Dikarya</taxon>
        <taxon>Ascomycota</taxon>
        <taxon>Saccharomycotina</taxon>
        <taxon>Saccharomycetes</taxon>
        <taxon>Saccharomycetales</taxon>
        <taxon>Saccharomycetaceae</taxon>
        <taxon>Saccharomyces</taxon>
    </lineage>
</organism>
<dbReference type="EC" id="3.1.4.54"/>
<dbReference type="EMBL" id="U43281">
    <property type="protein sequence ID" value="AAB68197.1"/>
    <property type="molecule type" value="Genomic_DNA"/>
</dbReference>
<dbReference type="EMBL" id="BK006949">
    <property type="protein sequence ID" value="DAA11330.1"/>
    <property type="molecule type" value="Genomic_DNA"/>
</dbReference>
<dbReference type="PIR" id="S61964">
    <property type="entry name" value="S61964"/>
</dbReference>
<dbReference type="RefSeq" id="NP_015222.1">
    <property type="nucleotide sequence ID" value="NM_001183917.1"/>
</dbReference>
<dbReference type="SMR" id="Q02883"/>
<dbReference type="BioGRID" id="36078">
    <property type="interactions" value="145"/>
</dbReference>
<dbReference type="FunCoup" id="Q02883">
    <property type="interactions" value="63"/>
</dbReference>
<dbReference type="STRING" id="4932.YPL103C"/>
<dbReference type="SwissLipids" id="SLP:000000081"/>
<dbReference type="PaxDb" id="4932-YPL103C"/>
<dbReference type="PeptideAtlas" id="Q02883"/>
<dbReference type="DNASU" id="856001"/>
<dbReference type="EnsemblFungi" id="YPL103C_mRNA">
    <property type="protein sequence ID" value="YPL103C"/>
    <property type="gene ID" value="YPL103C"/>
</dbReference>
<dbReference type="GeneID" id="856001"/>
<dbReference type="KEGG" id="sce:YPL103C"/>
<dbReference type="AGR" id="SGD:S000006024"/>
<dbReference type="SGD" id="S000006024">
    <property type="gene designation" value="FMP30"/>
</dbReference>
<dbReference type="VEuPathDB" id="FungiDB:YPL103C"/>
<dbReference type="eggNOG" id="KOG3798">
    <property type="taxonomic scope" value="Eukaryota"/>
</dbReference>
<dbReference type="GeneTree" id="ENSGT00940000173847"/>
<dbReference type="HOGENOM" id="CLU_020884_2_1_1"/>
<dbReference type="InParanoid" id="Q02883"/>
<dbReference type="OMA" id="CTPAMHW"/>
<dbReference type="OrthoDB" id="332863at2759"/>
<dbReference type="BioCyc" id="YEAST:G3O-34005-MONOMER"/>
<dbReference type="BioGRID-ORCS" id="856001">
    <property type="hits" value="1 hit in 10 CRISPR screens"/>
</dbReference>
<dbReference type="PRO" id="PR:Q02883"/>
<dbReference type="Proteomes" id="UP000002311">
    <property type="component" value="Chromosome XVI"/>
</dbReference>
<dbReference type="RNAct" id="Q02883">
    <property type="molecule type" value="protein"/>
</dbReference>
<dbReference type="GO" id="GO:0005737">
    <property type="term" value="C:cytoplasm"/>
    <property type="evidence" value="ECO:0000318"/>
    <property type="project" value="GO_Central"/>
</dbReference>
<dbReference type="GO" id="GO:0005743">
    <property type="term" value="C:mitochondrial inner membrane"/>
    <property type="evidence" value="ECO:0000314"/>
    <property type="project" value="SGD"/>
</dbReference>
<dbReference type="GO" id="GO:0005739">
    <property type="term" value="C:mitochondrion"/>
    <property type="evidence" value="ECO:0007005"/>
    <property type="project" value="SGD"/>
</dbReference>
<dbReference type="GO" id="GO:0070290">
    <property type="term" value="F:N-acylphosphatidylethanolamine-specific phospholipase D activity"/>
    <property type="evidence" value="ECO:0000250"/>
    <property type="project" value="SGD"/>
</dbReference>
<dbReference type="GO" id="GO:0008270">
    <property type="term" value="F:zinc ion binding"/>
    <property type="evidence" value="ECO:0007669"/>
    <property type="project" value="InterPro"/>
</dbReference>
<dbReference type="GO" id="GO:0070291">
    <property type="term" value="P:N-acylethanolamine metabolic process"/>
    <property type="evidence" value="ECO:0000315"/>
    <property type="project" value="SGD"/>
</dbReference>
<dbReference type="GO" id="GO:0070292">
    <property type="term" value="P:N-acylphosphatidylethanolamine metabolic process"/>
    <property type="evidence" value="ECO:0000315"/>
    <property type="project" value="SGD"/>
</dbReference>
<dbReference type="GO" id="GO:0009395">
    <property type="term" value="P:phospholipid catabolic process"/>
    <property type="evidence" value="ECO:0007669"/>
    <property type="project" value="UniProtKB-KW"/>
</dbReference>
<dbReference type="FunFam" id="3.60.15.10:FF:000059">
    <property type="entry name" value="N-acetylphosphatidylethanolamine-hydrolyzing phospholipase D"/>
    <property type="match status" value="1"/>
</dbReference>
<dbReference type="Gene3D" id="3.60.15.10">
    <property type="entry name" value="Ribonuclease Z/Hydroxyacylglutathione hydrolase-like"/>
    <property type="match status" value="1"/>
</dbReference>
<dbReference type="InterPro" id="IPR001279">
    <property type="entry name" value="Metallo-B-lactamas"/>
</dbReference>
<dbReference type="InterPro" id="IPR024884">
    <property type="entry name" value="NAPE-PLD"/>
</dbReference>
<dbReference type="InterPro" id="IPR036866">
    <property type="entry name" value="RibonucZ/Hydroxyglut_hydro"/>
</dbReference>
<dbReference type="PANTHER" id="PTHR15032">
    <property type="entry name" value="N-ACYL-PHOSPHATIDYLETHANOLAMINE-HYDROLYZING PHOSPHOLIPASE D"/>
    <property type="match status" value="1"/>
</dbReference>
<dbReference type="PANTHER" id="PTHR15032:SF4">
    <property type="entry name" value="N-ACYL-PHOSPHATIDYLETHANOLAMINE-HYDROLYZING PHOSPHOLIPASE D"/>
    <property type="match status" value="1"/>
</dbReference>
<dbReference type="Pfam" id="PF12706">
    <property type="entry name" value="Lactamase_B_2"/>
    <property type="match status" value="1"/>
</dbReference>
<dbReference type="PIRSF" id="PIRSF038896">
    <property type="entry name" value="NAPE-PLD"/>
    <property type="match status" value="1"/>
</dbReference>
<dbReference type="SUPFAM" id="SSF56281">
    <property type="entry name" value="Metallo-hydrolase/oxidoreductase"/>
    <property type="match status" value="1"/>
</dbReference>
<reference key="1">
    <citation type="journal article" date="1997" name="Nature">
        <title>The nucleotide sequence of Saccharomyces cerevisiae chromosome XVI.</title>
        <authorList>
            <person name="Bussey H."/>
            <person name="Storms R.K."/>
            <person name="Ahmed A."/>
            <person name="Albermann K."/>
            <person name="Allen E."/>
            <person name="Ansorge W."/>
            <person name="Araujo R."/>
            <person name="Aparicio A."/>
            <person name="Barrell B.G."/>
            <person name="Badcock K."/>
            <person name="Benes V."/>
            <person name="Botstein D."/>
            <person name="Bowman S."/>
            <person name="Brueckner M."/>
            <person name="Carpenter J."/>
            <person name="Cherry J.M."/>
            <person name="Chung E."/>
            <person name="Churcher C.M."/>
            <person name="Coster F."/>
            <person name="Davis K."/>
            <person name="Davis R.W."/>
            <person name="Dietrich F.S."/>
            <person name="Delius H."/>
            <person name="DiPaolo T."/>
            <person name="Dubois E."/>
            <person name="Duesterhoeft A."/>
            <person name="Duncan M."/>
            <person name="Floeth M."/>
            <person name="Fortin N."/>
            <person name="Friesen J.D."/>
            <person name="Fritz C."/>
            <person name="Goffeau A."/>
            <person name="Hall J."/>
            <person name="Hebling U."/>
            <person name="Heumann K."/>
            <person name="Hilbert H."/>
            <person name="Hillier L.W."/>
            <person name="Hunicke-Smith S."/>
            <person name="Hyman R.W."/>
            <person name="Johnston M."/>
            <person name="Kalman S."/>
            <person name="Kleine K."/>
            <person name="Komp C."/>
            <person name="Kurdi O."/>
            <person name="Lashkari D."/>
            <person name="Lew H."/>
            <person name="Lin A."/>
            <person name="Lin D."/>
            <person name="Louis E.J."/>
            <person name="Marathe R."/>
            <person name="Messenguy F."/>
            <person name="Mewes H.-W."/>
            <person name="Mirtipati S."/>
            <person name="Moestl D."/>
            <person name="Mueller-Auer S."/>
            <person name="Namath A."/>
            <person name="Nentwich U."/>
            <person name="Oefner P."/>
            <person name="Pearson D."/>
            <person name="Petel F.X."/>
            <person name="Pohl T.M."/>
            <person name="Purnelle B."/>
            <person name="Rajandream M.A."/>
            <person name="Rechmann S."/>
            <person name="Rieger M."/>
            <person name="Riles L."/>
            <person name="Roberts D."/>
            <person name="Schaefer M."/>
            <person name="Scharfe M."/>
            <person name="Scherens B."/>
            <person name="Schramm S."/>
            <person name="Schroeder M."/>
            <person name="Sdicu A.-M."/>
            <person name="Tettelin H."/>
            <person name="Urrestarazu L.A."/>
            <person name="Ushinsky S."/>
            <person name="Vierendeels F."/>
            <person name="Vissers S."/>
            <person name="Voss H."/>
            <person name="Walsh S.V."/>
            <person name="Wambutt R."/>
            <person name="Wang Y."/>
            <person name="Wedler E."/>
            <person name="Wedler H."/>
            <person name="Winnett E."/>
            <person name="Zhong W.-W."/>
            <person name="Zollner A."/>
            <person name="Vo D.H."/>
            <person name="Hani J."/>
        </authorList>
    </citation>
    <scope>NUCLEOTIDE SEQUENCE [LARGE SCALE GENOMIC DNA]</scope>
    <source>
        <strain>ATCC 204508 / S288c</strain>
    </source>
</reference>
<reference key="2">
    <citation type="journal article" date="2014" name="G3 (Bethesda)">
        <title>The reference genome sequence of Saccharomyces cerevisiae: Then and now.</title>
        <authorList>
            <person name="Engel S.R."/>
            <person name="Dietrich F.S."/>
            <person name="Fisk D.G."/>
            <person name="Binkley G."/>
            <person name="Balakrishnan R."/>
            <person name="Costanzo M.C."/>
            <person name="Dwight S.S."/>
            <person name="Hitz B.C."/>
            <person name="Karra K."/>
            <person name="Nash R.S."/>
            <person name="Weng S."/>
            <person name="Wong E.D."/>
            <person name="Lloyd P."/>
            <person name="Skrzypek M.S."/>
            <person name="Miyasato S.R."/>
            <person name="Simison M."/>
            <person name="Cherry J.M."/>
        </authorList>
    </citation>
    <scope>GENOME REANNOTATION</scope>
    <source>
        <strain>ATCC 204508 / S288c</strain>
    </source>
</reference>
<reference key="3">
    <citation type="journal article" date="2003" name="Nature">
        <title>Global analysis of protein expression in yeast.</title>
        <authorList>
            <person name="Ghaemmaghami S."/>
            <person name="Huh W.-K."/>
            <person name="Bower K."/>
            <person name="Howson R.W."/>
            <person name="Belle A."/>
            <person name="Dephoure N."/>
            <person name="O'Shea E.K."/>
            <person name="Weissman J.S."/>
        </authorList>
    </citation>
    <scope>LEVEL OF PROTEIN EXPRESSION [LARGE SCALE ANALYSIS]</scope>
</reference>
<reference key="4">
    <citation type="journal article" date="2003" name="Proc. Natl. Acad. Sci. U.S.A.">
        <title>The proteome of Saccharomyces cerevisiae mitochondria.</title>
        <authorList>
            <person name="Sickmann A."/>
            <person name="Reinders J."/>
            <person name="Wagner Y."/>
            <person name="Joppich C."/>
            <person name="Zahedi R.P."/>
            <person name="Meyer H.E."/>
            <person name="Schoenfisch B."/>
            <person name="Perschil I."/>
            <person name="Chacinska A."/>
            <person name="Guiard B."/>
            <person name="Rehling P."/>
            <person name="Pfanner N."/>
            <person name="Meisinger C."/>
        </authorList>
    </citation>
    <scope>SUBCELLULAR LOCATION [LARGE SCALE ANALYSIS]</scope>
    <source>
        <strain>ATCC 76625 / YPH499</strain>
    </source>
</reference>
<reference key="5">
    <citation type="journal article" date="2005" name="Biochim. Biophys. Acta">
        <title>Presence and potential signaling function of N-acylethanolamines and their phospholipid precursors in the yeast Saccharomyces cerevisiae.</title>
        <authorList>
            <person name="Merkel O."/>
            <person name="Schmid P.C."/>
            <person name="Paltauf F."/>
            <person name="Schmid H.H.O."/>
        </authorList>
    </citation>
    <scope>FUNCTION</scope>
</reference>
<reference key="6">
    <citation type="journal article" date="2005" name="Science">
        <title>Logic of the yeast metabolic cycle: temporal compartmentalization of cellular processes.</title>
        <authorList>
            <person name="Tu B.P."/>
            <person name="Kudlicki A."/>
            <person name="Rowicka M."/>
            <person name="McKnight S.L."/>
        </authorList>
    </citation>
    <scope>INDUCTION</scope>
</reference>
<name>FMP30_YEAST</name>
<evidence type="ECO:0000250" key="1"/>
<evidence type="ECO:0000255" key="2"/>
<evidence type="ECO:0000269" key="3">
    <source>
    </source>
</evidence>
<evidence type="ECO:0000269" key="4">
    <source>
    </source>
</evidence>
<evidence type="ECO:0000269" key="5">
    <source>
    </source>
</evidence>
<evidence type="ECO:0000305" key="6"/>
<proteinExistence type="evidence at protein level"/>
<gene>
    <name type="primary">FMP30</name>
    <name type="ordered locus">YPL103C</name>
</gene>
<accession>Q02883</accession>
<accession>D6W3R4</accession>
<protein>
    <recommendedName>
        <fullName>N-acyl-phosphatidylethanolamine-hydrolyzing phospholipase D, mitochondrial</fullName>
        <shortName>NAPE-PLD</shortName>
        <shortName>NAPE-hydrolyzing phospholipase D</shortName>
        <ecNumber>3.1.4.54</ecNumber>
    </recommendedName>
    <alternativeName>
        <fullName>Found in mitochondrial proteome protein 30</fullName>
    </alternativeName>
</protein>
<sequence length="468" mass="54368">MNFVTCHVQMRLLLQRRLVRLRESELFRPQTSLSTFKRHASQKTRPIQKCSRKYARILLLSVLVPYTGYAFYVSLATVKQIDLRNEMCQRLEENNNEVTYKGSLLKYSPLEVLGRFENPFEEYRIQTVFEFFANRVFELFERNRGGIPRDVHQMNKLMPVHKPTWGPNLVDVDPAEETALPLECKVLDELHIPTAVEENEGSKCPVYNTWLGQSCNYTVYNGLRILTDPLFSDFLIHKTLGPKRITQMPSQITEVPKPDIILVSHNHPDHLDLESLEYWSGKDSPLWIVPKGMKSYMTSNGCDNVLELSWWETLQVKKNNEIYHISATPAMHWSGRSLLDTNKSLWCSFLLTHHGNPILFHAGDTGYVKDLFVRIKERFGKGCKLALLPCGQYCPEWHQKPRHINPQEVLKIMKDLEARNVLGVHWGTFVLSGEYFLEPKEKLEMLAEWGGFKDRCYCPELGKTECFD</sequence>